<keyword id="KW-1015">Disulfide bond</keyword>
<keyword id="KW-0960">Knottin</keyword>
<keyword id="KW-0708">Seed storage protein</keyword>
<keyword id="KW-0732">Signal</keyword>
<keyword id="KW-0758">Storage protein</keyword>
<keyword id="KW-0800">Toxin</keyword>
<dbReference type="EMBL" id="M13709">
    <property type="protein sequence ID" value="AAA33638.1"/>
    <property type="molecule type" value="Genomic_DNA"/>
</dbReference>
<dbReference type="PIR" id="A25014">
    <property type="entry name" value="A25014"/>
</dbReference>
<dbReference type="GO" id="GO:0045735">
    <property type="term" value="F:nutrient reservoir activity"/>
    <property type="evidence" value="ECO:0007669"/>
    <property type="project" value="UniProtKB-KW"/>
</dbReference>
<dbReference type="GO" id="GO:0090729">
    <property type="term" value="F:toxin activity"/>
    <property type="evidence" value="ECO:0007669"/>
    <property type="project" value="UniProtKB-KW"/>
</dbReference>
<dbReference type="InterPro" id="IPR012512">
    <property type="entry name" value="Albumin_I"/>
</dbReference>
<dbReference type="InterPro" id="IPR032000">
    <property type="entry name" value="Albumin_I_a"/>
</dbReference>
<dbReference type="Pfam" id="PF08027">
    <property type="entry name" value="Albumin_I"/>
    <property type="match status" value="1"/>
</dbReference>
<dbReference type="Pfam" id="PF16720">
    <property type="entry name" value="Albumin_I_a"/>
    <property type="match status" value="1"/>
</dbReference>
<dbReference type="SUPFAM" id="SSF57059">
    <property type="entry name" value="omega toxin-like"/>
    <property type="match status" value="1"/>
</dbReference>
<organism>
    <name type="scientific">Pisum sativum</name>
    <name type="common">Garden pea</name>
    <name type="synonym">Lathyrus oleraceus</name>
    <dbReference type="NCBI Taxonomy" id="3888"/>
    <lineage>
        <taxon>Eukaryota</taxon>
        <taxon>Viridiplantae</taxon>
        <taxon>Streptophyta</taxon>
        <taxon>Embryophyta</taxon>
        <taxon>Tracheophyta</taxon>
        <taxon>Spermatophyta</taxon>
        <taxon>Magnoliopsida</taxon>
        <taxon>eudicotyledons</taxon>
        <taxon>Gunneridae</taxon>
        <taxon>Pentapetalae</taxon>
        <taxon>rosids</taxon>
        <taxon>fabids</taxon>
        <taxon>Fabales</taxon>
        <taxon>Fabaceae</taxon>
        <taxon>Papilionoideae</taxon>
        <taxon>50 kb inversion clade</taxon>
        <taxon>NPAAA clade</taxon>
        <taxon>Hologalegina</taxon>
        <taxon>IRL clade</taxon>
        <taxon>Fabeae</taxon>
        <taxon>Pisum</taxon>
    </lineage>
</organism>
<accession>P62926</accession>
<accession>P08687</accession>
<accession>Q40999</accession>
<accession>Q9M3X4</accession>
<proteinExistence type="evidence at transcript level"/>
<protein>
    <recommendedName>
        <fullName>Albumin-1 A</fullName>
    </recommendedName>
    <alternativeName>
        <fullName>PA1 A</fullName>
    </alternativeName>
    <component>
        <recommendedName>
            <fullName>Albumin-1 A chain b</fullName>
        </recommendedName>
        <alternativeName>
            <fullName>Leginsulin A</fullName>
        </alternativeName>
        <alternativeName>
            <fullName>PA1b A</fullName>
        </alternativeName>
    </component>
    <component>
        <recommendedName>
            <fullName>Albumin-1 A chain a</fullName>
        </recommendedName>
        <alternativeName>
            <fullName>PA1a A</fullName>
        </alternativeName>
    </component>
</protein>
<name>ALB1A_PEA</name>
<sequence length="130" mass="13912">MASVKLASLIVLFATLGMFLTKNVGAASCNGVCSPFEMPPCGTSACRCIPVGLVVGYCRNPSGVFLRTNDEHPNLCESDADCRKKGSGNFCGHYPNPDIEYGWCFASKSEAEDFFSKITPKDLLKSVSTA</sequence>
<feature type="signal peptide" evidence="2">
    <location>
        <begin position="1"/>
        <end position="26"/>
    </location>
</feature>
<feature type="chain" id="PRO_0000032215" description="Albumin-1 A chain b">
    <location>
        <begin position="27"/>
        <end position="63"/>
    </location>
</feature>
<feature type="propeptide" id="PRO_0000032216" evidence="2">
    <location>
        <begin position="64"/>
        <end position="69"/>
    </location>
</feature>
<feature type="chain" id="PRO_0000032217" description="Albumin-1 A chain a">
    <location>
        <begin position="70"/>
        <end position="122"/>
    </location>
</feature>
<feature type="propeptide" id="PRO_0000032218" evidence="2">
    <location>
        <begin position="123"/>
        <end position="130"/>
    </location>
</feature>
<feature type="disulfide bond" evidence="1">
    <location>
        <begin position="29"/>
        <end position="46"/>
    </location>
</feature>
<feature type="disulfide bond" evidence="1">
    <location>
        <begin position="33"/>
        <end position="48"/>
    </location>
</feature>
<feature type="disulfide bond" evidence="1">
    <location>
        <begin position="41"/>
        <end position="58"/>
    </location>
</feature>
<reference key="1">
    <citation type="journal article" date="1986" name="J. Biol. Chem.">
        <title>Gene structure, protein structure, and regulation of the synthesis of a sulfur-rich protein in pea seeds.</title>
        <authorList>
            <person name="Higgins T.J.V."/>
            <person name="Chandler P.M."/>
            <person name="Randall P.J."/>
            <person name="Spencer D."/>
            <person name="Beach L.R."/>
            <person name="Blagrove R.J."/>
            <person name="Kortt A.A."/>
            <person name="Inglis A.S."/>
        </authorList>
    </citation>
    <scope>NUCLEOTIDE SEQUENCE [GENOMIC DNA]</scope>
    <scope>DEVELOPMENTAL STAGE</scope>
    <scope>TISSUE SPECIFICITY</scope>
    <source>
        <strain>cv. Greenfeast</strain>
        <tissue>Seed</tissue>
    </source>
</reference>
<evidence type="ECO:0000250" key="1"/>
<evidence type="ECO:0000255" key="2"/>
<evidence type="ECO:0000269" key="3">
    <source>
    </source>
</evidence>
<comment type="function">
    <text evidence="1">PA1b binds to basic 7S globulin (BG) and stimulates its phosphorylation activity. Involved in the signal transduction system to regulate the growth and differentiation as a hormone peptide. Toxic to various insects through binding to a high affinity binding site in the insect gut (By similarity).</text>
</comment>
<comment type="tissue specificity">
    <text evidence="3">Major component of both the cotyledons and embryonic axes of mature seeds.</text>
</comment>
<comment type="developmental stage">
    <text evidence="3">Increasing expression during seed development followed by a rapid degradation during the first days of seed germination.</text>
</comment>
<comment type="domain">
    <text evidence="1">The presence of a 'disulfide through disulfide knot' structurally defines this protein as a knottin.</text>
</comment>
<comment type="PTM">
    <text>The C-terminal glycine may be removed from PA1b.</text>
</comment>